<comment type="function">
    <text evidence="1">One of the primary rRNA binding proteins, it binds directly to 16S rRNA where it nucleates assembly of the body of the 30S subunit.</text>
</comment>
<comment type="function">
    <text evidence="1">With S5 and S12 plays an important role in translational accuracy.</text>
</comment>
<comment type="subunit">
    <text evidence="1">Part of the 30S ribosomal subunit. Contacts protein S5. The interaction surface between S4 and S5 is involved in control of translational fidelity.</text>
</comment>
<comment type="similarity">
    <text evidence="1">Belongs to the universal ribosomal protein uS4 family.</text>
</comment>
<organism>
    <name type="scientific">Rhizobium meliloti (strain 1021)</name>
    <name type="common">Ensifer meliloti</name>
    <name type="synonym">Sinorhizobium meliloti</name>
    <dbReference type="NCBI Taxonomy" id="266834"/>
    <lineage>
        <taxon>Bacteria</taxon>
        <taxon>Pseudomonadati</taxon>
        <taxon>Pseudomonadota</taxon>
        <taxon>Alphaproteobacteria</taxon>
        <taxon>Hyphomicrobiales</taxon>
        <taxon>Rhizobiaceae</taxon>
        <taxon>Sinorhizobium/Ensifer group</taxon>
        <taxon>Sinorhizobium</taxon>
    </lineage>
</organism>
<gene>
    <name evidence="1" type="primary">rpsD</name>
    <name type="ordered locus">R01787</name>
    <name type="ORF">SMc00485</name>
</gene>
<sequence length="205" mass="23515">MSKRESSKYKIDRRMGENIWGRPKSPVNRREYGPGQHGQRRKSKLSDFGVQLRAKQKLKGYYGDIREKQFRAIFAEASRRKGDTPENLVGLLESRLDAIVYRAKFVPTVFAARQFVNHGHVKVNGVRVNIGSYRCKPGDVIEVKEKSKQLVTVLEAVQLAERDVPDYIEADHNKMVATFVRVPALSDVPYPVVMEPHLVVEFYSR</sequence>
<dbReference type="EMBL" id="AL591688">
    <property type="protein sequence ID" value="CAC46366.1"/>
    <property type="molecule type" value="Genomic_DNA"/>
</dbReference>
<dbReference type="RefSeq" id="NP_385893.1">
    <property type="nucleotide sequence ID" value="NC_003047.1"/>
</dbReference>
<dbReference type="RefSeq" id="WP_003533017.1">
    <property type="nucleotide sequence ID" value="NC_003047.1"/>
</dbReference>
<dbReference type="SMR" id="Q92PG9"/>
<dbReference type="EnsemblBacteria" id="CAC46366">
    <property type="protein sequence ID" value="CAC46366"/>
    <property type="gene ID" value="SMc00485"/>
</dbReference>
<dbReference type="GeneID" id="89576126"/>
<dbReference type="KEGG" id="sme:SMc00485"/>
<dbReference type="PATRIC" id="fig|266834.11.peg.3228"/>
<dbReference type="eggNOG" id="COG0522">
    <property type="taxonomic scope" value="Bacteria"/>
</dbReference>
<dbReference type="HOGENOM" id="CLU_092403_0_0_5"/>
<dbReference type="OrthoDB" id="9803672at2"/>
<dbReference type="Proteomes" id="UP000001976">
    <property type="component" value="Chromosome"/>
</dbReference>
<dbReference type="GO" id="GO:0015935">
    <property type="term" value="C:small ribosomal subunit"/>
    <property type="evidence" value="ECO:0007669"/>
    <property type="project" value="InterPro"/>
</dbReference>
<dbReference type="GO" id="GO:0019843">
    <property type="term" value="F:rRNA binding"/>
    <property type="evidence" value="ECO:0007669"/>
    <property type="project" value="UniProtKB-UniRule"/>
</dbReference>
<dbReference type="GO" id="GO:0003735">
    <property type="term" value="F:structural constituent of ribosome"/>
    <property type="evidence" value="ECO:0007669"/>
    <property type="project" value="InterPro"/>
</dbReference>
<dbReference type="GO" id="GO:0042274">
    <property type="term" value="P:ribosomal small subunit biogenesis"/>
    <property type="evidence" value="ECO:0007669"/>
    <property type="project" value="TreeGrafter"/>
</dbReference>
<dbReference type="GO" id="GO:0006412">
    <property type="term" value="P:translation"/>
    <property type="evidence" value="ECO:0007669"/>
    <property type="project" value="UniProtKB-UniRule"/>
</dbReference>
<dbReference type="CDD" id="cd00165">
    <property type="entry name" value="S4"/>
    <property type="match status" value="1"/>
</dbReference>
<dbReference type="FunFam" id="3.10.290.10:FF:000001">
    <property type="entry name" value="30S ribosomal protein S4"/>
    <property type="match status" value="1"/>
</dbReference>
<dbReference type="Gene3D" id="1.10.1050.10">
    <property type="entry name" value="Ribosomal Protein S4 Delta 41, Chain A, domain 1"/>
    <property type="match status" value="1"/>
</dbReference>
<dbReference type="Gene3D" id="3.10.290.10">
    <property type="entry name" value="RNA-binding S4 domain"/>
    <property type="match status" value="1"/>
</dbReference>
<dbReference type="HAMAP" id="MF_01306_B">
    <property type="entry name" value="Ribosomal_uS4_B"/>
    <property type="match status" value="1"/>
</dbReference>
<dbReference type="InterPro" id="IPR022801">
    <property type="entry name" value="Ribosomal_uS4"/>
</dbReference>
<dbReference type="InterPro" id="IPR005709">
    <property type="entry name" value="Ribosomal_uS4_bac-type"/>
</dbReference>
<dbReference type="InterPro" id="IPR018079">
    <property type="entry name" value="Ribosomal_uS4_CS"/>
</dbReference>
<dbReference type="InterPro" id="IPR001912">
    <property type="entry name" value="Ribosomal_uS4_N"/>
</dbReference>
<dbReference type="InterPro" id="IPR002942">
    <property type="entry name" value="S4_RNA-bd"/>
</dbReference>
<dbReference type="InterPro" id="IPR036986">
    <property type="entry name" value="S4_RNA-bd_sf"/>
</dbReference>
<dbReference type="NCBIfam" id="NF003717">
    <property type="entry name" value="PRK05327.1"/>
    <property type="match status" value="1"/>
</dbReference>
<dbReference type="NCBIfam" id="TIGR01017">
    <property type="entry name" value="rpsD_bact"/>
    <property type="match status" value="1"/>
</dbReference>
<dbReference type="PANTHER" id="PTHR11831">
    <property type="entry name" value="30S 40S RIBOSOMAL PROTEIN"/>
    <property type="match status" value="1"/>
</dbReference>
<dbReference type="PANTHER" id="PTHR11831:SF4">
    <property type="entry name" value="SMALL RIBOSOMAL SUBUNIT PROTEIN US4M"/>
    <property type="match status" value="1"/>
</dbReference>
<dbReference type="Pfam" id="PF00163">
    <property type="entry name" value="Ribosomal_S4"/>
    <property type="match status" value="1"/>
</dbReference>
<dbReference type="Pfam" id="PF01479">
    <property type="entry name" value="S4"/>
    <property type="match status" value="1"/>
</dbReference>
<dbReference type="SMART" id="SM01390">
    <property type="entry name" value="Ribosomal_S4"/>
    <property type="match status" value="1"/>
</dbReference>
<dbReference type="SMART" id="SM00363">
    <property type="entry name" value="S4"/>
    <property type="match status" value="1"/>
</dbReference>
<dbReference type="SUPFAM" id="SSF55174">
    <property type="entry name" value="Alpha-L RNA-binding motif"/>
    <property type="match status" value="1"/>
</dbReference>
<dbReference type="PROSITE" id="PS00632">
    <property type="entry name" value="RIBOSOMAL_S4"/>
    <property type="match status" value="1"/>
</dbReference>
<dbReference type="PROSITE" id="PS50889">
    <property type="entry name" value="S4"/>
    <property type="match status" value="1"/>
</dbReference>
<protein>
    <recommendedName>
        <fullName evidence="1">Small ribosomal subunit protein uS4</fullName>
    </recommendedName>
    <alternativeName>
        <fullName evidence="3">30S ribosomal protein S4</fullName>
    </alternativeName>
</protein>
<keyword id="KW-1185">Reference proteome</keyword>
<keyword id="KW-0687">Ribonucleoprotein</keyword>
<keyword id="KW-0689">Ribosomal protein</keyword>
<keyword id="KW-0694">RNA-binding</keyword>
<keyword id="KW-0699">rRNA-binding</keyword>
<feature type="chain" id="PRO_0000132443" description="Small ribosomal subunit protein uS4">
    <location>
        <begin position="1"/>
        <end position="205"/>
    </location>
</feature>
<feature type="domain" description="S4 RNA-binding" evidence="1">
    <location>
        <begin position="94"/>
        <end position="157"/>
    </location>
</feature>
<feature type="region of interest" description="Disordered" evidence="2">
    <location>
        <begin position="1"/>
        <end position="46"/>
    </location>
</feature>
<feature type="compositionally biased region" description="Basic and acidic residues" evidence="2">
    <location>
        <begin position="1"/>
        <end position="16"/>
    </location>
</feature>
<reference key="1">
    <citation type="journal article" date="2001" name="Proc. Natl. Acad. Sci. U.S.A.">
        <title>Analysis of the chromosome sequence of the legume symbiont Sinorhizobium meliloti strain 1021.</title>
        <authorList>
            <person name="Capela D."/>
            <person name="Barloy-Hubler F."/>
            <person name="Gouzy J."/>
            <person name="Bothe G."/>
            <person name="Ampe F."/>
            <person name="Batut J."/>
            <person name="Boistard P."/>
            <person name="Becker A."/>
            <person name="Boutry M."/>
            <person name="Cadieu E."/>
            <person name="Dreano S."/>
            <person name="Gloux S."/>
            <person name="Godrie T."/>
            <person name="Goffeau A."/>
            <person name="Kahn D."/>
            <person name="Kiss E."/>
            <person name="Lelaure V."/>
            <person name="Masuy D."/>
            <person name="Pohl T."/>
            <person name="Portetelle D."/>
            <person name="Puehler A."/>
            <person name="Purnelle B."/>
            <person name="Ramsperger U."/>
            <person name="Renard C."/>
            <person name="Thebault P."/>
            <person name="Vandenbol M."/>
            <person name="Weidner S."/>
            <person name="Galibert F."/>
        </authorList>
    </citation>
    <scope>NUCLEOTIDE SEQUENCE [LARGE SCALE GENOMIC DNA]</scope>
    <source>
        <strain>1021</strain>
    </source>
</reference>
<reference key="2">
    <citation type="journal article" date="2001" name="Science">
        <title>The composite genome of the legume symbiont Sinorhizobium meliloti.</title>
        <authorList>
            <person name="Galibert F."/>
            <person name="Finan T.M."/>
            <person name="Long S.R."/>
            <person name="Puehler A."/>
            <person name="Abola P."/>
            <person name="Ampe F."/>
            <person name="Barloy-Hubler F."/>
            <person name="Barnett M.J."/>
            <person name="Becker A."/>
            <person name="Boistard P."/>
            <person name="Bothe G."/>
            <person name="Boutry M."/>
            <person name="Bowser L."/>
            <person name="Buhrmester J."/>
            <person name="Cadieu E."/>
            <person name="Capela D."/>
            <person name="Chain P."/>
            <person name="Cowie A."/>
            <person name="Davis R.W."/>
            <person name="Dreano S."/>
            <person name="Federspiel N.A."/>
            <person name="Fisher R.F."/>
            <person name="Gloux S."/>
            <person name="Godrie T."/>
            <person name="Goffeau A."/>
            <person name="Golding B."/>
            <person name="Gouzy J."/>
            <person name="Gurjal M."/>
            <person name="Hernandez-Lucas I."/>
            <person name="Hong A."/>
            <person name="Huizar L."/>
            <person name="Hyman R.W."/>
            <person name="Jones T."/>
            <person name="Kahn D."/>
            <person name="Kahn M.L."/>
            <person name="Kalman S."/>
            <person name="Keating D.H."/>
            <person name="Kiss E."/>
            <person name="Komp C."/>
            <person name="Lelaure V."/>
            <person name="Masuy D."/>
            <person name="Palm C."/>
            <person name="Peck M.C."/>
            <person name="Pohl T.M."/>
            <person name="Portetelle D."/>
            <person name="Purnelle B."/>
            <person name="Ramsperger U."/>
            <person name="Surzycki R."/>
            <person name="Thebault P."/>
            <person name="Vandenbol M."/>
            <person name="Vorhoelter F.J."/>
            <person name="Weidner S."/>
            <person name="Wells D.H."/>
            <person name="Wong K."/>
            <person name="Yeh K.-C."/>
            <person name="Batut J."/>
        </authorList>
    </citation>
    <scope>NUCLEOTIDE SEQUENCE [LARGE SCALE GENOMIC DNA]</scope>
    <source>
        <strain>1021</strain>
    </source>
</reference>
<accession>Q92PG9</accession>
<name>RS4_RHIME</name>
<evidence type="ECO:0000255" key="1">
    <source>
        <dbReference type="HAMAP-Rule" id="MF_01306"/>
    </source>
</evidence>
<evidence type="ECO:0000256" key="2">
    <source>
        <dbReference type="SAM" id="MobiDB-lite"/>
    </source>
</evidence>
<evidence type="ECO:0000305" key="3"/>
<proteinExistence type="inferred from homology"/>